<protein>
    <recommendedName>
        <fullName evidence="1">Protoheme IX farnesyltransferase</fullName>
        <ecNumber evidence="1">2.5.1.141</ecNumber>
    </recommendedName>
    <alternativeName>
        <fullName evidence="1">Heme B farnesyltransferase</fullName>
    </alternativeName>
    <alternativeName>
        <fullName evidence="1">Heme O synthase</fullName>
    </alternativeName>
</protein>
<keyword id="KW-0997">Cell inner membrane</keyword>
<keyword id="KW-1003">Cell membrane</keyword>
<keyword id="KW-0350">Heme biosynthesis</keyword>
<keyword id="KW-0472">Membrane</keyword>
<keyword id="KW-0808">Transferase</keyword>
<keyword id="KW-0812">Transmembrane</keyword>
<keyword id="KW-1133">Transmembrane helix</keyword>
<dbReference type="EC" id="2.5.1.141" evidence="1"/>
<dbReference type="EMBL" id="CP000720">
    <property type="protein sequence ID" value="ABS48178.1"/>
    <property type="molecule type" value="Genomic_DNA"/>
</dbReference>
<dbReference type="RefSeq" id="WP_002208653.1">
    <property type="nucleotide sequence ID" value="NC_009708.1"/>
</dbReference>
<dbReference type="SMR" id="A7FLD4"/>
<dbReference type="GeneID" id="57975544"/>
<dbReference type="KEGG" id="ypi:YpsIP31758_3102"/>
<dbReference type="HOGENOM" id="CLU_029631_0_0_6"/>
<dbReference type="UniPathway" id="UPA00834">
    <property type="reaction ID" value="UER00712"/>
</dbReference>
<dbReference type="Proteomes" id="UP000002412">
    <property type="component" value="Chromosome"/>
</dbReference>
<dbReference type="GO" id="GO:0005886">
    <property type="term" value="C:plasma membrane"/>
    <property type="evidence" value="ECO:0007669"/>
    <property type="project" value="UniProtKB-SubCell"/>
</dbReference>
<dbReference type="GO" id="GO:0008495">
    <property type="term" value="F:protoheme IX farnesyltransferase activity"/>
    <property type="evidence" value="ECO:0007669"/>
    <property type="project" value="UniProtKB-UniRule"/>
</dbReference>
<dbReference type="GO" id="GO:0048034">
    <property type="term" value="P:heme O biosynthetic process"/>
    <property type="evidence" value="ECO:0007669"/>
    <property type="project" value="UniProtKB-UniRule"/>
</dbReference>
<dbReference type="CDD" id="cd13957">
    <property type="entry name" value="PT_UbiA_Cox10"/>
    <property type="match status" value="1"/>
</dbReference>
<dbReference type="FunFam" id="1.10.357.140:FF:000001">
    <property type="entry name" value="Protoheme IX farnesyltransferase"/>
    <property type="match status" value="1"/>
</dbReference>
<dbReference type="Gene3D" id="1.10.357.140">
    <property type="entry name" value="UbiA prenyltransferase"/>
    <property type="match status" value="1"/>
</dbReference>
<dbReference type="HAMAP" id="MF_00154">
    <property type="entry name" value="CyoE_CtaB"/>
    <property type="match status" value="1"/>
</dbReference>
<dbReference type="InterPro" id="IPR006369">
    <property type="entry name" value="Protohaem_IX_farnesylTrfase"/>
</dbReference>
<dbReference type="InterPro" id="IPR000537">
    <property type="entry name" value="UbiA_prenyltransferase"/>
</dbReference>
<dbReference type="InterPro" id="IPR030470">
    <property type="entry name" value="UbiA_prenylTrfase_CS"/>
</dbReference>
<dbReference type="InterPro" id="IPR044878">
    <property type="entry name" value="UbiA_sf"/>
</dbReference>
<dbReference type="NCBIfam" id="TIGR01473">
    <property type="entry name" value="cyoE_ctaB"/>
    <property type="match status" value="1"/>
</dbReference>
<dbReference type="NCBIfam" id="NF003348">
    <property type="entry name" value="PRK04375.1-1"/>
    <property type="match status" value="1"/>
</dbReference>
<dbReference type="PANTHER" id="PTHR43448">
    <property type="entry name" value="PROTOHEME IX FARNESYLTRANSFERASE, MITOCHONDRIAL"/>
    <property type="match status" value="1"/>
</dbReference>
<dbReference type="PANTHER" id="PTHR43448:SF2">
    <property type="entry name" value="PROTOHEME IX FARNESYLTRANSFERASE, MITOCHONDRIAL"/>
    <property type="match status" value="1"/>
</dbReference>
<dbReference type="Pfam" id="PF01040">
    <property type="entry name" value="UbiA"/>
    <property type="match status" value="1"/>
</dbReference>
<dbReference type="PROSITE" id="PS00943">
    <property type="entry name" value="UBIA"/>
    <property type="match status" value="1"/>
</dbReference>
<reference key="1">
    <citation type="journal article" date="2007" name="PLoS Genet.">
        <title>The complete genome sequence of Yersinia pseudotuberculosis IP31758, the causative agent of Far East scarlet-like fever.</title>
        <authorList>
            <person name="Eppinger M."/>
            <person name="Rosovitz M.J."/>
            <person name="Fricke W.F."/>
            <person name="Rasko D.A."/>
            <person name="Kokorina G."/>
            <person name="Fayolle C."/>
            <person name="Lindler L.E."/>
            <person name="Carniel E."/>
            <person name="Ravel J."/>
        </authorList>
    </citation>
    <scope>NUCLEOTIDE SEQUENCE [LARGE SCALE GENOMIC DNA]</scope>
    <source>
        <strain>IP 31758</strain>
    </source>
</reference>
<feature type="chain" id="PRO_0000346020" description="Protoheme IX farnesyltransferase">
    <location>
        <begin position="1"/>
        <end position="295"/>
    </location>
</feature>
<feature type="transmembrane region" description="Helical" evidence="1">
    <location>
        <begin position="8"/>
        <end position="28"/>
    </location>
</feature>
<feature type="transmembrane region" description="Helical" evidence="1">
    <location>
        <begin position="35"/>
        <end position="55"/>
    </location>
</feature>
<feature type="transmembrane region" description="Helical" evidence="1">
    <location>
        <begin position="74"/>
        <end position="94"/>
    </location>
</feature>
<feature type="transmembrane region" description="Helical" evidence="1">
    <location>
        <begin position="98"/>
        <end position="118"/>
    </location>
</feature>
<feature type="transmembrane region" description="Helical" evidence="1">
    <location>
        <begin position="132"/>
        <end position="152"/>
    </location>
</feature>
<feature type="transmembrane region" description="Helical" evidence="1">
    <location>
        <begin position="162"/>
        <end position="182"/>
    </location>
</feature>
<feature type="transmembrane region" description="Helical" evidence="1">
    <location>
        <begin position="208"/>
        <end position="228"/>
    </location>
</feature>
<feature type="transmembrane region" description="Helical" evidence="1">
    <location>
        <begin position="233"/>
        <end position="253"/>
    </location>
</feature>
<feature type="transmembrane region" description="Helical" evidence="1">
    <location>
        <begin position="264"/>
        <end position="284"/>
    </location>
</feature>
<gene>
    <name evidence="1" type="primary">cyoE</name>
    <name type="ordered locus">YpsIP31758_3102</name>
</gene>
<name>CYOE_YERP3</name>
<organism>
    <name type="scientific">Yersinia pseudotuberculosis serotype O:1b (strain IP 31758)</name>
    <dbReference type="NCBI Taxonomy" id="349747"/>
    <lineage>
        <taxon>Bacteria</taxon>
        <taxon>Pseudomonadati</taxon>
        <taxon>Pseudomonadota</taxon>
        <taxon>Gammaproteobacteria</taxon>
        <taxon>Enterobacterales</taxon>
        <taxon>Yersiniaceae</taxon>
        <taxon>Yersinia</taxon>
    </lineage>
</organism>
<proteinExistence type="inferred from homology"/>
<evidence type="ECO:0000255" key="1">
    <source>
        <dbReference type="HAMAP-Rule" id="MF_00154"/>
    </source>
</evidence>
<accession>A7FLD4</accession>
<comment type="function">
    <text evidence="1">Converts heme B (protoheme IX) to heme O by substitution of the vinyl group on carbon 2 of heme B porphyrin ring with a hydroxyethyl farnesyl side group.</text>
</comment>
<comment type="catalytic activity">
    <reaction evidence="1">
        <text>heme b + (2E,6E)-farnesyl diphosphate + H2O = Fe(II)-heme o + diphosphate</text>
        <dbReference type="Rhea" id="RHEA:28070"/>
        <dbReference type="ChEBI" id="CHEBI:15377"/>
        <dbReference type="ChEBI" id="CHEBI:33019"/>
        <dbReference type="ChEBI" id="CHEBI:60344"/>
        <dbReference type="ChEBI" id="CHEBI:60530"/>
        <dbReference type="ChEBI" id="CHEBI:175763"/>
        <dbReference type="EC" id="2.5.1.141"/>
    </reaction>
</comment>
<comment type="pathway">
    <text evidence="1">Porphyrin-containing compound metabolism; heme O biosynthesis; heme O from protoheme: step 1/1.</text>
</comment>
<comment type="subcellular location">
    <subcellularLocation>
        <location evidence="1">Cell inner membrane</location>
        <topology evidence="1">Multi-pass membrane protein</topology>
    </subcellularLocation>
</comment>
<comment type="miscellaneous">
    <text evidence="1">Carbon 2 of the heme B porphyrin ring is defined according to the Fischer nomenclature.</text>
</comment>
<comment type="similarity">
    <text evidence="1">Belongs to the UbiA prenyltransferase family. Protoheme IX farnesyltransferase subfamily.</text>
</comment>
<sequence>MIKQYLQVTKPGIIFGNLISVIGGFLLASKGDIDYPLFLSTLLGVSLVVASGCVFNNYIDRDIDKIMERTKNRVLVKGLIDPKVSLIYASVLGIAGMLLLYVAANALAMMLAVIGFVIYVGVYSLYMKRKSVYGTLIGSLSGAAPPVIGYCAVTGQFDTGALILLLIFSLWQMPHSYAIAIFRFKDYQAANIPVLPVIKGISVTKNHITLYILAFMVATLMLTLSGYAGYKYLVVAAAVSVWWLGMALRGYKATNDSVWARKLFVFSIIAITSLSVMMSVDFNVHSSAVLLTYAG</sequence>